<feature type="chain" id="PRO_0000193327" description="Demethylmenaquinone methyltransferase">
    <location>
        <begin position="1"/>
        <end position="241"/>
    </location>
</feature>
<feature type="binding site" evidence="1">
    <location>
        <position position="60"/>
    </location>
    <ligand>
        <name>S-adenosyl-L-methionine</name>
        <dbReference type="ChEBI" id="CHEBI:59789"/>
    </ligand>
</feature>
<feature type="binding site" evidence="1">
    <location>
        <position position="81"/>
    </location>
    <ligand>
        <name>S-adenosyl-L-methionine</name>
        <dbReference type="ChEBI" id="CHEBI:59789"/>
    </ligand>
</feature>
<feature type="binding site" evidence="1">
    <location>
        <begin position="106"/>
        <end position="107"/>
    </location>
    <ligand>
        <name>S-adenosyl-L-methionine</name>
        <dbReference type="ChEBI" id="CHEBI:59789"/>
    </ligand>
</feature>
<evidence type="ECO:0000255" key="1">
    <source>
        <dbReference type="HAMAP-Rule" id="MF_01813"/>
    </source>
</evidence>
<name>MENG_STAAC</name>
<keyword id="KW-0474">Menaquinone biosynthesis</keyword>
<keyword id="KW-0489">Methyltransferase</keyword>
<keyword id="KW-0949">S-adenosyl-L-methionine</keyword>
<keyword id="KW-0808">Transferase</keyword>
<dbReference type="EC" id="2.1.1.163" evidence="1"/>
<dbReference type="EMBL" id="CP000046">
    <property type="protein sequence ID" value="AAW36706.1"/>
    <property type="molecule type" value="Genomic_DNA"/>
</dbReference>
<dbReference type="RefSeq" id="WP_000774684.1">
    <property type="nucleotide sequence ID" value="NZ_JBGOFO010000003.1"/>
</dbReference>
<dbReference type="SMR" id="Q5HFV2"/>
<dbReference type="KEGG" id="sac:SACOL1511"/>
<dbReference type="HOGENOM" id="CLU_037990_0_0_9"/>
<dbReference type="UniPathway" id="UPA00079">
    <property type="reaction ID" value="UER00169"/>
</dbReference>
<dbReference type="Proteomes" id="UP000000530">
    <property type="component" value="Chromosome"/>
</dbReference>
<dbReference type="GO" id="GO:0043770">
    <property type="term" value="F:demethylmenaquinone methyltransferase activity"/>
    <property type="evidence" value="ECO:0007669"/>
    <property type="project" value="UniProtKB-UniRule"/>
</dbReference>
<dbReference type="GO" id="GO:0009234">
    <property type="term" value="P:menaquinone biosynthetic process"/>
    <property type="evidence" value="ECO:0007669"/>
    <property type="project" value="UniProtKB-UniRule"/>
</dbReference>
<dbReference type="GO" id="GO:0032259">
    <property type="term" value="P:methylation"/>
    <property type="evidence" value="ECO:0007669"/>
    <property type="project" value="UniProtKB-KW"/>
</dbReference>
<dbReference type="CDD" id="cd02440">
    <property type="entry name" value="AdoMet_MTases"/>
    <property type="match status" value="1"/>
</dbReference>
<dbReference type="FunFam" id="3.40.50.150:FF:000086">
    <property type="entry name" value="Demethylmenaquinone methyltransferase"/>
    <property type="match status" value="1"/>
</dbReference>
<dbReference type="Gene3D" id="3.40.50.150">
    <property type="entry name" value="Vaccinia Virus protein VP39"/>
    <property type="match status" value="1"/>
</dbReference>
<dbReference type="HAMAP" id="MF_01813">
    <property type="entry name" value="MenG_UbiE_methyltr"/>
    <property type="match status" value="1"/>
</dbReference>
<dbReference type="InterPro" id="IPR029063">
    <property type="entry name" value="SAM-dependent_MTases_sf"/>
</dbReference>
<dbReference type="InterPro" id="IPR004033">
    <property type="entry name" value="UbiE/COQ5_MeTrFase"/>
</dbReference>
<dbReference type="InterPro" id="IPR023576">
    <property type="entry name" value="UbiE/COQ5_MeTrFase_CS"/>
</dbReference>
<dbReference type="NCBIfam" id="TIGR01934">
    <property type="entry name" value="MenG_MenH_UbiE"/>
    <property type="match status" value="1"/>
</dbReference>
<dbReference type="NCBIfam" id="NF001243">
    <property type="entry name" value="PRK00216.1-4"/>
    <property type="match status" value="1"/>
</dbReference>
<dbReference type="NCBIfam" id="NF001244">
    <property type="entry name" value="PRK00216.1-5"/>
    <property type="match status" value="1"/>
</dbReference>
<dbReference type="PANTHER" id="PTHR43591:SF24">
    <property type="entry name" value="2-METHOXY-6-POLYPRENYL-1,4-BENZOQUINOL METHYLASE, MITOCHONDRIAL"/>
    <property type="match status" value="1"/>
</dbReference>
<dbReference type="PANTHER" id="PTHR43591">
    <property type="entry name" value="METHYLTRANSFERASE"/>
    <property type="match status" value="1"/>
</dbReference>
<dbReference type="Pfam" id="PF01209">
    <property type="entry name" value="Ubie_methyltran"/>
    <property type="match status" value="1"/>
</dbReference>
<dbReference type="SUPFAM" id="SSF53335">
    <property type="entry name" value="S-adenosyl-L-methionine-dependent methyltransferases"/>
    <property type="match status" value="1"/>
</dbReference>
<dbReference type="PROSITE" id="PS51608">
    <property type="entry name" value="SAM_MT_UBIE"/>
    <property type="match status" value="1"/>
</dbReference>
<dbReference type="PROSITE" id="PS01183">
    <property type="entry name" value="UBIE_1"/>
    <property type="match status" value="1"/>
</dbReference>
<dbReference type="PROSITE" id="PS01184">
    <property type="entry name" value="UBIE_2"/>
    <property type="match status" value="1"/>
</dbReference>
<proteinExistence type="inferred from homology"/>
<protein>
    <recommendedName>
        <fullName evidence="1">Demethylmenaquinone methyltransferase</fullName>
        <ecNumber evidence="1">2.1.1.163</ecNumber>
    </recommendedName>
</protein>
<accession>Q5HFV2</accession>
<sequence>MADNKANKEQVHRVFQNISKKYDRLNNIISFEQHKVWRKRVMKDMGVRKGTKALDVCCGTGDWTIALSKAVGPTGEVTGIDFSENMLEVGKEKTASMENVKLVHGDAMELPFEDNSFDYVTIGFGLRNVPDYLVALKEMNRVLKPGGMVVCLETSQPTLPVFKQMYALYFKFVMPIFGKLFAKSKEEYEWLQQSTFNFPGKEELKRMFEEAGFINVRVRSFTGGVAAMHLGYKEKDNTKGD</sequence>
<organism>
    <name type="scientific">Staphylococcus aureus (strain COL)</name>
    <dbReference type="NCBI Taxonomy" id="93062"/>
    <lineage>
        <taxon>Bacteria</taxon>
        <taxon>Bacillati</taxon>
        <taxon>Bacillota</taxon>
        <taxon>Bacilli</taxon>
        <taxon>Bacillales</taxon>
        <taxon>Staphylococcaceae</taxon>
        <taxon>Staphylococcus</taxon>
    </lineage>
</organism>
<comment type="function">
    <text evidence="1">Methyltransferase required for the conversion of demethylmenaquinol (DMKH2) to menaquinol (MKH2).</text>
</comment>
<comment type="catalytic activity">
    <reaction evidence="1">
        <text>a 2-demethylmenaquinol + S-adenosyl-L-methionine = a menaquinol + S-adenosyl-L-homocysteine + H(+)</text>
        <dbReference type="Rhea" id="RHEA:42640"/>
        <dbReference type="Rhea" id="RHEA-COMP:9539"/>
        <dbReference type="Rhea" id="RHEA-COMP:9563"/>
        <dbReference type="ChEBI" id="CHEBI:15378"/>
        <dbReference type="ChEBI" id="CHEBI:18151"/>
        <dbReference type="ChEBI" id="CHEBI:55437"/>
        <dbReference type="ChEBI" id="CHEBI:57856"/>
        <dbReference type="ChEBI" id="CHEBI:59789"/>
        <dbReference type="EC" id="2.1.1.163"/>
    </reaction>
</comment>
<comment type="pathway">
    <text evidence="1">Quinol/quinone metabolism; menaquinone biosynthesis; menaquinol from 1,4-dihydroxy-2-naphthoate: step 2/2.</text>
</comment>
<comment type="similarity">
    <text evidence="1">Belongs to the class I-like SAM-binding methyltransferase superfamily. MenG/UbiE family.</text>
</comment>
<gene>
    <name evidence="1" type="primary">menG</name>
    <name type="ordered locus">SACOL1511</name>
</gene>
<reference key="1">
    <citation type="journal article" date="2005" name="J. Bacteriol.">
        <title>Insights on evolution of virulence and resistance from the complete genome analysis of an early methicillin-resistant Staphylococcus aureus strain and a biofilm-producing methicillin-resistant Staphylococcus epidermidis strain.</title>
        <authorList>
            <person name="Gill S.R."/>
            <person name="Fouts D.E."/>
            <person name="Archer G.L."/>
            <person name="Mongodin E.F."/>
            <person name="DeBoy R.T."/>
            <person name="Ravel J."/>
            <person name="Paulsen I.T."/>
            <person name="Kolonay J.F."/>
            <person name="Brinkac L.M."/>
            <person name="Beanan M.J."/>
            <person name="Dodson R.J."/>
            <person name="Daugherty S.C."/>
            <person name="Madupu R."/>
            <person name="Angiuoli S.V."/>
            <person name="Durkin A.S."/>
            <person name="Haft D.H."/>
            <person name="Vamathevan J.J."/>
            <person name="Khouri H."/>
            <person name="Utterback T.R."/>
            <person name="Lee C."/>
            <person name="Dimitrov G."/>
            <person name="Jiang L."/>
            <person name="Qin H."/>
            <person name="Weidman J."/>
            <person name="Tran K."/>
            <person name="Kang K.H."/>
            <person name="Hance I.R."/>
            <person name="Nelson K.E."/>
            <person name="Fraser C.M."/>
        </authorList>
    </citation>
    <scope>NUCLEOTIDE SEQUENCE [LARGE SCALE GENOMIC DNA]</scope>
    <source>
        <strain>COL</strain>
    </source>
</reference>